<feature type="chain" id="PRO_0000060205" description="Phosphate transport system permease protein PstA homolog">
    <location>
        <begin position="1"/>
        <end position="651"/>
    </location>
</feature>
<feature type="transmembrane region" description="Helical" evidence="2">
    <location>
        <begin position="22"/>
        <end position="42"/>
    </location>
</feature>
<feature type="transmembrane region" description="Helical" evidence="2">
    <location>
        <begin position="64"/>
        <end position="84"/>
    </location>
</feature>
<feature type="transmembrane region" description="Helical" evidence="2">
    <location>
        <begin position="107"/>
        <end position="127"/>
    </location>
</feature>
<feature type="transmembrane region" description="Helical" evidence="2">
    <location>
        <begin position="143"/>
        <end position="163"/>
    </location>
</feature>
<feature type="transmembrane region" description="Helical" evidence="2">
    <location>
        <begin position="203"/>
        <end position="223"/>
    </location>
</feature>
<feature type="transmembrane region" description="Helical" evidence="2">
    <location>
        <begin position="266"/>
        <end position="286"/>
    </location>
</feature>
<feature type="transmembrane region" description="Helical" evidence="2">
    <location>
        <begin position="368"/>
        <end position="388"/>
    </location>
</feature>
<feature type="transmembrane region" description="Helical" evidence="2">
    <location>
        <begin position="417"/>
        <end position="437"/>
    </location>
</feature>
<feature type="transmembrane region" description="Helical" evidence="2">
    <location>
        <begin position="451"/>
        <end position="471"/>
    </location>
</feature>
<feature type="transmembrane region" description="Helical" evidence="2">
    <location>
        <begin position="486"/>
        <end position="506"/>
    </location>
</feature>
<feature type="transmembrane region" description="Helical" evidence="2">
    <location>
        <begin position="535"/>
        <end position="555"/>
    </location>
</feature>
<feature type="transmembrane region" description="Helical" evidence="2">
    <location>
        <begin position="613"/>
        <end position="633"/>
    </location>
</feature>
<feature type="domain" description="ABC transmembrane type-1 1" evidence="2">
    <location>
        <begin position="70"/>
        <end position="285"/>
    </location>
</feature>
<feature type="domain" description="ABC transmembrane type-1 2" evidence="2">
    <location>
        <begin position="413"/>
        <end position="623"/>
    </location>
</feature>
<dbReference type="EMBL" id="U00089">
    <property type="protein sequence ID" value="AAB95880.1"/>
    <property type="molecule type" value="Genomic_DNA"/>
</dbReference>
<dbReference type="PIR" id="S73558">
    <property type="entry name" value="S73558"/>
</dbReference>
<dbReference type="RefSeq" id="NP_110299.1">
    <property type="nucleotide sequence ID" value="NC_000912.1"/>
</dbReference>
<dbReference type="RefSeq" id="WP_010874967.1">
    <property type="nucleotide sequence ID" value="NZ_OU342337.1"/>
</dbReference>
<dbReference type="SMR" id="P75185"/>
<dbReference type="STRING" id="272634.MPN_610"/>
<dbReference type="EnsemblBacteria" id="AAB95880">
    <property type="protein sequence ID" value="AAB95880"/>
    <property type="gene ID" value="MPN_610"/>
</dbReference>
<dbReference type="GeneID" id="66608705"/>
<dbReference type="KEGG" id="mpn:MPN_610"/>
<dbReference type="PATRIC" id="fig|272634.6.peg.673"/>
<dbReference type="HOGENOM" id="CLU_023674_0_0_14"/>
<dbReference type="OrthoDB" id="9785113at2"/>
<dbReference type="BioCyc" id="MPNE272634:G1GJ3-985-MONOMER"/>
<dbReference type="Proteomes" id="UP000000808">
    <property type="component" value="Chromosome"/>
</dbReference>
<dbReference type="GO" id="GO:0005886">
    <property type="term" value="C:plasma membrane"/>
    <property type="evidence" value="ECO:0007669"/>
    <property type="project" value="UniProtKB-SubCell"/>
</dbReference>
<dbReference type="GO" id="GO:0005315">
    <property type="term" value="F:phosphate transmembrane transporter activity"/>
    <property type="evidence" value="ECO:0007669"/>
    <property type="project" value="InterPro"/>
</dbReference>
<dbReference type="GO" id="GO:0035435">
    <property type="term" value="P:phosphate ion transmembrane transport"/>
    <property type="evidence" value="ECO:0007669"/>
    <property type="project" value="InterPro"/>
</dbReference>
<dbReference type="CDD" id="cd06261">
    <property type="entry name" value="TM_PBP2"/>
    <property type="match status" value="2"/>
</dbReference>
<dbReference type="Gene3D" id="1.10.3720.10">
    <property type="entry name" value="MetI-like"/>
    <property type="match status" value="2"/>
</dbReference>
<dbReference type="InterPro" id="IPR000515">
    <property type="entry name" value="MetI-like"/>
</dbReference>
<dbReference type="InterPro" id="IPR035906">
    <property type="entry name" value="MetI-like_sf"/>
</dbReference>
<dbReference type="InterPro" id="IPR005672">
    <property type="entry name" value="Phosphate_PstA"/>
</dbReference>
<dbReference type="InterPro" id="IPR051124">
    <property type="entry name" value="Phosphate_Transport_Permease"/>
</dbReference>
<dbReference type="NCBIfam" id="TIGR00974">
    <property type="entry name" value="3a0107s02c"/>
    <property type="match status" value="1"/>
</dbReference>
<dbReference type="PANTHER" id="PTHR30425">
    <property type="entry name" value="PHOSPHATE TRANSPORT SYSTEM PERMEASE PROTEIN PST"/>
    <property type="match status" value="1"/>
</dbReference>
<dbReference type="PANTHER" id="PTHR30425:SF1">
    <property type="entry name" value="PHOSPHATE TRANSPORT SYSTEM PERMEASE PROTEIN PSTC"/>
    <property type="match status" value="1"/>
</dbReference>
<dbReference type="Pfam" id="PF00528">
    <property type="entry name" value="BPD_transp_1"/>
    <property type="match status" value="2"/>
</dbReference>
<dbReference type="PRINTS" id="PR00173">
    <property type="entry name" value="EDTRNSPORT"/>
</dbReference>
<dbReference type="SUPFAM" id="SSF161098">
    <property type="entry name" value="MetI-like"/>
    <property type="match status" value="2"/>
</dbReference>
<dbReference type="PROSITE" id="PS50928">
    <property type="entry name" value="ABC_TM1"/>
    <property type="match status" value="2"/>
</dbReference>
<accession>P75185</accession>
<evidence type="ECO:0000250" key="1"/>
<evidence type="ECO:0000255" key="2">
    <source>
        <dbReference type="PROSITE-ProRule" id="PRU00441"/>
    </source>
</evidence>
<evidence type="ECO:0000305" key="3"/>
<proteinExistence type="inferred from homology"/>
<sequence length="651" mass="72748">MKQKIKSRLKKDNWLRYLSQTVAVCFLLLFISFFIFLLIEAAKTGPDFTKSLLGLEFNLGAKKASIWFPLLVSFVVSIGSLIIASYIGVRTSIFLVYRCKPRIRKKLLLVIDILSGIPSVIFGLFATQILSSIFRDVLHLPPLSLLNVIVMLSFMIIPIVISLTTNALLHVESSLMTVAISLGENKTSVIYKVIKKEIKAQLVVILVLAFGRAISETMAVNFILQSVNYQEVIANDRFFTSDLKTLGSVISTFIFSENGDEQVSGVLYTFGIIIFVLISFLNFFAIWSTRPKTLERYPFLKKISNFIYQVVWFIPNNIGALFTDLTARRQQVKKITAANVEQRATFFKERMQTNHLNKVYTSWKILQEIFCAVLAFGFVLGILLFVFINGSQAIQRSGSTVFSFGVDTTGRALVNTLVIILVAIGITFPIALLIAIWLNEYTKSRIAKNTFSFVIDSLSSMPSIIYGLFGLSFFLRTLQLSAGGANGTSLMAGILTISVVVLPFLIRTCQEALNNVSWDLRVSAYALGVSKREVIWKIVLPGALKGLIIALILTINRIIAETAPFFITAGLASSNLFDLSLPGQTLTTRIYGQLFSTNSTAVDVMLETALVSIVFLMFLIFLSSYLIPYLFSFNKQKWLQIKSKLQLWKKA</sequence>
<organism>
    <name type="scientific">Mycoplasma pneumoniae (strain ATCC 29342 / M129 / Subtype 1)</name>
    <name type="common">Mycoplasmoides pneumoniae</name>
    <dbReference type="NCBI Taxonomy" id="272634"/>
    <lineage>
        <taxon>Bacteria</taxon>
        <taxon>Bacillati</taxon>
        <taxon>Mycoplasmatota</taxon>
        <taxon>Mycoplasmoidales</taxon>
        <taxon>Mycoplasmoidaceae</taxon>
        <taxon>Mycoplasmoides</taxon>
    </lineage>
</organism>
<comment type="function">
    <text evidence="1">Could be part of a binding-protein-dependent transport system for phosphate; probably responsible for the translocation of the substrate across the membrane.</text>
</comment>
<comment type="subcellular location">
    <subcellularLocation>
        <location evidence="3">Cell membrane</location>
        <topology evidence="2">Multi-pass membrane protein</topology>
    </subcellularLocation>
</comment>
<comment type="similarity">
    <text evidence="3">Belongs to the binding-protein-dependent transport system permease family. CysTW subfamily.</text>
</comment>
<gene>
    <name type="primary">pstA</name>
    <name type="ordered locus">MPN_610</name>
    <name type="ORF">MP232</name>
</gene>
<protein>
    <recommendedName>
        <fullName>Phosphate transport system permease protein PstA homolog</fullName>
    </recommendedName>
</protein>
<name>PSTA_MYCPN</name>
<keyword id="KW-1003">Cell membrane</keyword>
<keyword id="KW-0472">Membrane</keyword>
<keyword id="KW-0592">Phosphate transport</keyword>
<keyword id="KW-1185">Reference proteome</keyword>
<keyword id="KW-0677">Repeat</keyword>
<keyword id="KW-0812">Transmembrane</keyword>
<keyword id="KW-1133">Transmembrane helix</keyword>
<keyword id="KW-0813">Transport</keyword>
<reference key="1">
    <citation type="journal article" date="1996" name="Nucleic Acids Res.">
        <title>Complete sequence analysis of the genome of the bacterium Mycoplasma pneumoniae.</title>
        <authorList>
            <person name="Himmelreich R."/>
            <person name="Hilbert H."/>
            <person name="Plagens H."/>
            <person name="Pirkl E."/>
            <person name="Li B.-C."/>
            <person name="Herrmann R."/>
        </authorList>
    </citation>
    <scope>NUCLEOTIDE SEQUENCE [LARGE SCALE GENOMIC DNA]</scope>
    <source>
        <strain>ATCC 29342 / M129 / Subtype 1</strain>
    </source>
</reference>